<name>FADR_VIBC3</name>
<feature type="chain" id="PRO_1000072761" description="Fatty acid metabolism regulator protein">
    <location>
        <begin position="1"/>
        <end position="279"/>
    </location>
</feature>
<feature type="domain" description="HTH gntR-type" evidence="1">
    <location>
        <begin position="6"/>
        <end position="74"/>
    </location>
</feature>
<feature type="DNA-binding region" description="H-T-H motif" evidence="1">
    <location>
        <begin position="34"/>
        <end position="53"/>
    </location>
</feature>
<gene>
    <name evidence="1" type="primary">fadR</name>
    <name type="ordered locus">VC0395_A1490</name>
    <name type="ordered locus">VC395_2015</name>
</gene>
<evidence type="ECO:0000255" key="1">
    <source>
        <dbReference type="HAMAP-Rule" id="MF_00696"/>
    </source>
</evidence>
<reference key="1">
    <citation type="submission" date="2007-03" db="EMBL/GenBank/DDBJ databases">
        <authorList>
            <person name="Heidelberg J."/>
        </authorList>
    </citation>
    <scope>NUCLEOTIDE SEQUENCE [LARGE SCALE GENOMIC DNA]</scope>
    <source>
        <strain>ATCC 39541 / Classical Ogawa 395 / O395</strain>
    </source>
</reference>
<reference key="2">
    <citation type="journal article" date="2008" name="PLoS ONE">
        <title>A recalibrated molecular clock and independent origins for the cholera pandemic clones.</title>
        <authorList>
            <person name="Feng L."/>
            <person name="Reeves P.R."/>
            <person name="Lan R."/>
            <person name="Ren Y."/>
            <person name="Gao C."/>
            <person name="Zhou Z."/>
            <person name="Ren Y."/>
            <person name="Cheng J."/>
            <person name="Wang W."/>
            <person name="Wang J."/>
            <person name="Qian W."/>
            <person name="Li D."/>
            <person name="Wang L."/>
        </authorList>
    </citation>
    <scope>NUCLEOTIDE SEQUENCE [LARGE SCALE GENOMIC DNA]</scope>
    <source>
        <strain>ATCC 39541 / Classical Ogawa 395 / O395</strain>
    </source>
</reference>
<organism>
    <name type="scientific">Vibrio cholerae serotype O1 (strain ATCC 39541 / Classical Ogawa 395 / O395)</name>
    <dbReference type="NCBI Taxonomy" id="345073"/>
    <lineage>
        <taxon>Bacteria</taxon>
        <taxon>Pseudomonadati</taxon>
        <taxon>Pseudomonadota</taxon>
        <taxon>Gammaproteobacteria</taxon>
        <taxon>Vibrionales</taxon>
        <taxon>Vibrionaceae</taxon>
        <taxon>Vibrio</taxon>
    </lineage>
</organism>
<keyword id="KW-0010">Activator</keyword>
<keyword id="KW-0963">Cytoplasm</keyword>
<keyword id="KW-0238">DNA-binding</keyword>
<keyword id="KW-0276">Fatty acid metabolism</keyword>
<keyword id="KW-0443">Lipid metabolism</keyword>
<keyword id="KW-0678">Repressor</keyword>
<keyword id="KW-0804">Transcription</keyword>
<keyword id="KW-0805">Transcription regulation</keyword>
<comment type="function">
    <text evidence="1">Multifunctional regulator of fatty acid metabolism.</text>
</comment>
<comment type="subunit">
    <text evidence="1">Homodimer.</text>
</comment>
<comment type="subcellular location">
    <subcellularLocation>
        <location evidence="1">Cytoplasm</location>
    </subcellularLocation>
</comment>
<proteinExistence type="inferred from homology"/>
<protein>
    <recommendedName>
        <fullName evidence="1">Fatty acid metabolism regulator protein</fullName>
    </recommendedName>
</protein>
<sequence>MVIKAKSPAGFAEKYIIESIWNGRFPPGSILPAERELSELIGVTRTTLREVLQRLARDGWLTIQHGKPTKVNQFMETSGLHILDTLMTLDAENATSIVEDLLAARTNISPIFMRYAFKLNKESAERIMINVIESCEALVNAPSWDAFIAASPYAEKIQQHVKEDSEKDELKRQEILIAKTFNFYDYMLFQRLAFHSGNQIYGLIFNGLKKLYDRVGSYYFSNPQARELAMEFYRQLLAVCQSGEREHLPQVIRQYGIASGHIWNQMKMTLPSNFTEDDC</sequence>
<accession>A5F6Z2</accession>
<accession>C3M1V3</accession>
<dbReference type="EMBL" id="CP000627">
    <property type="protein sequence ID" value="ABQ21763.1"/>
    <property type="molecule type" value="Genomic_DNA"/>
</dbReference>
<dbReference type="EMBL" id="CP001235">
    <property type="protein sequence ID" value="ACP10008.1"/>
    <property type="molecule type" value="Genomic_DNA"/>
</dbReference>
<dbReference type="RefSeq" id="WP_000234820.1">
    <property type="nucleotide sequence ID" value="NZ_JAACZH010000001.1"/>
</dbReference>
<dbReference type="SMR" id="A5F6Z2"/>
<dbReference type="GeneID" id="69719471"/>
<dbReference type="KEGG" id="vco:VC0395_A1490"/>
<dbReference type="KEGG" id="vcr:VC395_2015"/>
<dbReference type="PATRIC" id="fig|345073.21.peg.1948"/>
<dbReference type="eggNOG" id="COG2186">
    <property type="taxonomic scope" value="Bacteria"/>
</dbReference>
<dbReference type="HOGENOM" id="CLU_017584_9_4_6"/>
<dbReference type="OrthoDB" id="5683977at2"/>
<dbReference type="PHI-base" id="PHI:6702"/>
<dbReference type="Proteomes" id="UP000000249">
    <property type="component" value="Chromosome 2"/>
</dbReference>
<dbReference type="CollecTF" id="EXPREG_00000260"/>
<dbReference type="GO" id="GO:0005737">
    <property type="term" value="C:cytoplasm"/>
    <property type="evidence" value="ECO:0007669"/>
    <property type="project" value="UniProtKB-SubCell"/>
</dbReference>
<dbReference type="GO" id="GO:0003677">
    <property type="term" value="F:DNA binding"/>
    <property type="evidence" value="ECO:0007669"/>
    <property type="project" value="UniProtKB-KW"/>
</dbReference>
<dbReference type="GO" id="GO:0003700">
    <property type="term" value="F:DNA-binding transcription factor activity"/>
    <property type="evidence" value="ECO:0007669"/>
    <property type="project" value="UniProtKB-UniRule"/>
</dbReference>
<dbReference type="GO" id="GO:0000062">
    <property type="term" value="F:fatty-acyl-CoA binding"/>
    <property type="evidence" value="ECO:0007669"/>
    <property type="project" value="InterPro"/>
</dbReference>
<dbReference type="GO" id="GO:0006631">
    <property type="term" value="P:fatty acid metabolic process"/>
    <property type="evidence" value="ECO:0007669"/>
    <property type="project" value="UniProtKB-KW"/>
</dbReference>
<dbReference type="GO" id="GO:0019217">
    <property type="term" value="P:regulation of fatty acid metabolic process"/>
    <property type="evidence" value="ECO:0007669"/>
    <property type="project" value="UniProtKB-UniRule"/>
</dbReference>
<dbReference type="CDD" id="cd07377">
    <property type="entry name" value="WHTH_GntR"/>
    <property type="match status" value="1"/>
</dbReference>
<dbReference type="Gene3D" id="1.20.120.530">
    <property type="entry name" value="GntR ligand-binding domain-like"/>
    <property type="match status" value="1"/>
</dbReference>
<dbReference type="Gene3D" id="1.10.10.10">
    <property type="entry name" value="Winged helix-like DNA-binding domain superfamily/Winged helix DNA-binding domain"/>
    <property type="match status" value="1"/>
</dbReference>
<dbReference type="HAMAP" id="MF_00696">
    <property type="entry name" value="HTH_FadR"/>
    <property type="match status" value="1"/>
</dbReference>
<dbReference type="InterPro" id="IPR014178">
    <property type="entry name" value="FA-response_TF_FadR"/>
</dbReference>
<dbReference type="InterPro" id="IPR028374">
    <property type="entry name" value="FadR_C"/>
</dbReference>
<dbReference type="InterPro" id="IPR008920">
    <property type="entry name" value="TF_FadR/GntR_C"/>
</dbReference>
<dbReference type="InterPro" id="IPR000524">
    <property type="entry name" value="Tscrpt_reg_HTH_GntR"/>
</dbReference>
<dbReference type="InterPro" id="IPR036388">
    <property type="entry name" value="WH-like_DNA-bd_sf"/>
</dbReference>
<dbReference type="InterPro" id="IPR036390">
    <property type="entry name" value="WH_DNA-bd_sf"/>
</dbReference>
<dbReference type="NCBIfam" id="TIGR02812">
    <property type="entry name" value="fadR_gamma"/>
    <property type="match status" value="1"/>
</dbReference>
<dbReference type="NCBIfam" id="NF003444">
    <property type="entry name" value="PRK04984.1"/>
    <property type="match status" value="1"/>
</dbReference>
<dbReference type="PANTHER" id="PTHR43537:SF52">
    <property type="entry name" value="FATTY ACID METABOLISM REGULATOR PROTEIN"/>
    <property type="match status" value="1"/>
</dbReference>
<dbReference type="PANTHER" id="PTHR43537">
    <property type="entry name" value="TRANSCRIPTIONAL REGULATOR, GNTR FAMILY"/>
    <property type="match status" value="1"/>
</dbReference>
<dbReference type="Pfam" id="PF07840">
    <property type="entry name" value="FadR_C"/>
    <property type="match status" value="1"/>
</dbReference>
<dbReference type="Pfam" id="PF00392">
    <property type="entry name" value="GntR"/>
    <property type="match status" value="1"/>
</dbReference>
<dbReference type="PRINTS" id="PR00035">
    <property type="entry name" value="HTHGNTR"/>
</dbReference>
<dbReference type="SMART" id="SM00345">
    <property type="entry name" value="HTH_GNTR"/>
    <property type="match status" value="1"/>
</dbReference>
<dbReference type="SUPFAM" id="SSF48008">
    <property type="entry name" value="GntR ligand-binding domain-like"/>
    <property type="match status" value="1"/>
</dbReference>
<dbReference type="SUPFAM" id="SSF46785">
    <property type="entry name" value="Winged helix' DNA-binding domain"/>
    <property type="match status" value="1"/>
</dbReference>
<dbReference type="PROSITE" id="PS50949">
    <property type="entry name" value="HTH_GNTR"/>
    <property type="match status" value="1"/>
</dbReference>